<organism>
    <name type="scientific">Mus musculus</name>
    <name type="common">Mouse</name>
    <dbReference type="NCBI Taxonomy" id="10090"/>
    <lineage>
        <taxon>Eukaryota</taxon>
        <taxon>Metazoa</taxon>
        <taxon>Chordata</taxon>
        <taxon>Craniata</taxon>
        <taxon>Vertebrata</taxon>
        <taxon>Euteleostomi</taxon>
        <taxon>Mammalia</taxon>
        <taxon>Eutheria</taxon>
        <taxon>Euarchontoglires</taxon>
        <taxon>Glires</taxon>
        <taxon>Rodentia</taxon>
        <taxon>Myomorpha</taxon>
        <taxon>Muroidea</taxon>
        <taxon>Muridae</taxon>
        <taxon>Murinae</taxon>
        <taxon>Mus</taxon>
        <taxon>Mus</taxon>
    </lineage>
</organism>
<dbReference type="EMBL" id="AY227385">
    <property type="protein sequence ID" value="AAP51723.1"/>
    <property type="molecule type" value="mRNA"/>
</dbReference>
<dbReference type="EMBL" id="AY227386">
    <property type="protein sequence ID" value="AAP51724.1"/>
    <property type="molecule type" value="mRNA"/>
</dbReference>
<dbReference type="EMBL" id="AY227387">
    <property type="protein sequence ID" value="AAP51725.1"/>
    <property type="molecule type" value="mRNA"/>
</dbReference>
<dbReference type="EMBL" id="AY227388">
    <property type="protein sequence ID" value="AAP51726.1"/>
    <property type="molecule type" value="mRNA"/>
</dbReference>
<dbReference type="EMBL" id="AY227389">
    <property type="protein sequence ID" value="AAP51727.1"/>
    <property type="molecule type" value="mRNA"/>
</dbReference>
<dbReference type="EMBL" id="AY227390">
    <property type="protein sequence ID" value="AAP51728.1"/>
    <property type="molecule type" value="mRNA"/>
</dbReference>
<dbReference type="EMBL" id="AY227391">
    <property type="protein sequence ID" value="AAP51729.1"/>
    <property type="molecule type" value="mRNA"/>
</dbReference>
<dbReference type="EMBL" id="AY227392">
    <property type="protein sequence ID" value="AAP51730.1"/>
    <property type="molecule type" value="mRNA"/>
</dbReference>
<dbReference type="EMBL" id="AY227393">
    <property type="protein sequence ID" value="AAP51731.1"/>
    <property type="molecule type" value="mRNA"/>
</dbReference>
<dbReference type="EMBL" id="AK007714">
    <property type="protein sequence ID" value="BAB25207.1"/>
    <property type="molecule type" value="mRNA"/>
</dbReference>
<dbReference type="EMBL" id="AK155943">
    <property type="protein sequence ID" value="BAE33514.1"/>
    <property type="molecule type" value="mRNA"/>
</dbReference>
<dbReference type="EMBL" id="BC118505">
    <property type="protein sequence ID" value="AAI18506.1"/>
    <property type="molecule type" value="mRNA"/>
</dbReference>
<dbReference type="EMBL" id="BC116674">
    <property type="protein sequence ID" value="AAI16675.1"/>
    <property type="molecule type" value="mRNA"/>
</dbReference>
<dbReference type="RefSeq" id="NP_081252.1">
    <property type="nucleotide sequence ID" value="NM_026976.2"/>
</dbReference>
<dbReference type="SMR" id="A1KXC4"/>
<dbReference type="FunCoup" id="A1KXC4">
    <property type="interactions" value="607"/>
</dbReference>
<dbReference type="STRING" id="10090.ENSMUSP00000048303"/>
<dbReference type="GlyGen" id="A1KXC4">
    <property type="glycosylation" value="1 site, 1 O-linked glycan (1 site)"/>
</dbReference>
<dbReference type="iPTMnet" id="A1KXC4"/>
<dbReference type="PhosphoSitePlus" id="A1KXC4"/>
<dbReference type="PaxDb" id="10090-ENSMUSP00000048303"/>
<dbReference type="ProteomicsDB" id="271722"/>
<dbReference type="DNASU" id="69169"/>
<dbReference type="GeneID" id="69169"/>
<dbReference type="KEGG" id="mmu:69169"/>
<dbReference type="UCSC" id="uc007cmn.1">
    <property type="organism name" value="mouse"/>
</dbReference>
<dbReference type="AGR" id="MGI:1916419"/>
<dbReference type="CTD" id="9214"/>
<dbReference type="MGI" id="MGI:1916419">
    <property type="gene designation" value="Fcmr"/>
</dbReference>
<dbReference type="eggNOG" id="ENOG502S6XH">
    <property type="taxonomic scope" value="Eukaryota"/>
</dbReference>
<dbReference type="InParanoid" id="A1KXC4"/>
<dbReference type="OrthoDB" id="9805957at2759"/>
<dbReference type="PhylomeDB" id="A1KXC4"/>
<dbReference type="TreeFam" id="TF338713"/>
<dbReference type="BioGRID-ORCS" id="69169">
    <property type="hits" value="4 hits in 76 CRISPR screens"/>
</dbReference>
<dbReference type="PRO" id="PR:A1KXC4"/>
<dbReference type="Proteomes" id="UP000000589">
    <property type="component" value="Unplaced"/>
</dbReference>
<dbReference type="RNAct" id="A1KXC4">
    <property type="molecule type" value="protein"/>
</dbReference>
<dbReference type="GO" id="GO:0009986">
    <property type="term" value="C:cell surface"/>
    <property type="evidence" value="ECO:0000314"/>
    <property type="project" value="MGI"/>
</dbReference>
<dbReference type="GO" id="GO:0031901">
    <property type="term" value="C:early endosome membrane"/>
    <property type="evidence" value="ECO:0000250"/>
    <property type="project" value="UniProtKB"/>
</dbReference>
<dbReference type="GO" id="GO:0009897">
    <property type="term" value="C:external side of plasma membrane"/>
    <property type="evidence" value="ECO:0000314"/>
    <property type="project" value="MGI"/>
</dbReference>
<dbReference type="GO" id="GO:0005765">
    <property type="term" value="C:lysosomal membrane"/>
    <property type="evidence" value="ECO:0000250"/>
    <property type="project" value="UniProtKB"/>
</dbReference>
<dbReference type="GO" id="GO:0005886">
    <property type="term" value="C:plasma membrane"/>
    <property type="evidence" value="ECO:0000314"/>
    <property type="project" value="UniProtKB"/>
</dbReference>
<dbReference type="GO" id="GO:0032588">
    <property type="term" value="C:trans-Golgi network membrane"/>
    <property type="evidence" value="ECO:0000314"/>
    <property type="project" value="UniProtKB"/>
</dbReference>
<dbReference type="GO" id="GO:0002172">
    <property type="term" value="F:high-affinity IgM receptor activity"/>
    <property type="evidence" value="ECO:0000250"/>
    <property type="project" value="UniProtKB"/>
</dbReference>
<dbReference type="GO" id="GO:0001791">
    <property type="term" value="F:IgM binding"/>
    <property type="evidence" value="ECO:0000314"/>
    <property type="project" value="UniProtKB"/>
</dbReference>
<dbReference type="GO" id="GO:0001790">
    <property type="term" value="F:polymeric immunoglobulin binding"/>
    <property type="evidence" value="ECO:0000250"/>
    <property type="project" value="UniProtKB"/>
</dbReference>
<dbReference type="GO" id="GO:0160006">
    <property type="term" value="P:Fc receptor-mediated immune complex endocytosis"/>
    <property type="evidence" value="ECO:0000250"/>
    <property type="project" value="UniProtKB"/>
</dbReference>
<dbReference type="GO" id="GO:0002455">
    <property type="term" value="P:humoral immune response mediated by circulating immunoglobulin"/>
    <property type="evidence" value="ECO:0000315"/>
    <property type="project" value="UniProtKB"/>
</dbReference>
<dbReference type="GO" id="GO:0002414">
    <property type="term" value="P:immunoglobulin transcytosis in epithelial cells"/>
    <property type="evidence" value="ECO:0000314"/>
    <property type="project" value="UniProtKB"/>
</dbReference>
<dbReference type="GO" id="GO:2001237">
    <property type="term" value="P:negative regulation of extrinsic apoptotic signaling pathway"/>
    <property type="evidence" value="ECO:0000314"/>
    <property type="project" value="MGI"/>
</dbReference>
<dbReference type="GO" id="GO:0070229">
    <property type="term" value="P:negative regulation of lymphocyte apoptotic process"/>
    <property type="evidence" value="ECO:0000314"/>
    <property type="project" value="MGI"/>
</dbReference>
<dbReference type="GO" id="GO:0050855">
    <property type="term" value="P:regulation of B cell receptor signaling pathway"/>
    <property type="evidence" value="ECO:0000315"/>
    <property type="project" value="UniProtKB"/>
</dbReference>
<dbReference type="Gene3D" id="2.60.40.10">
    <property type="entry name" value="Immunoglobulins"/>
    <property type="match status" value="1"/>
</dbReference>
<dbReference type="InterPro" id="IPR050671">
    <property type="entry name" value="CD300_family_receptors"/>
</dbReference>
<dbReference type="InterPro" id="IPR036179">
    <property type="entry name" value="Ig-like_dom_sf"/>
</dbReference>
<dbReference type="InterPro" id="IPR013783">
    <property type="entry name" value="Ig-like_fold"/>
</dbReference>
<dbReference type="InterPro" id="IPR013106">
    <property type="entry name" value="Ig_V-set"/>
</dbReference>
<dbReference type="PANTHER" id="PTHR11860:SF59">
    <property type="entry name" value="FAS APOPTOTIC INHIBITORY MOLECULE 3"/>
    <property type="match status" value="1"/>
</dbReference>
<dbReference type="PANTHER" id="PTHR11860">
    <property type="entry name" value="POLYMERIC-IMMUNOGLOBULIN RECEPTOR"/>
    <property type="match status" value="1"/>
</dbReference>
<dbReference type="Pfam" id="PF07686">
    <property type="entry name" value="V-set"/>
    <property type="match status" value="1"/>
</dbReference>
<dbReference type="SUPFAM" id="SSF48726">
    <property type="entry name" value="Immunoglobulin"/>
    <property type="match status" value="1"/>
</dbReference>
<accession>A1KXC4</accession>
<accession>A1KXC6</accession>
<accession>A1KXC8</accession>
<accession>A1KXC9</accession>
<accession>Q148B9</accession>
<accession>Q9D8T1</accession>
<feature type="signal peptide" evidence="3">
    <location>
        <begin position="1"/>
        <end position="16"/>
    </location>
</feature>
<feature type="chain" id="PRO_0000284422" description="Immunoglobulin mu Fc receptor">
    <location>
        <begin position="17"/>
        <end position="422"/>
    </location>
</feature>
<feature type="topological domain" description="Extracellular" evidence="3">
    <location>
        <begin position="18"/>
        <end position="262"/>
    </location>
</feature>
<feature type="transmembrane region" description="Helical" evidence="3">
    <location>
        <begin position="263"/>
        <end position="283"/>
    </location>
</feature>
<feature type="topological domain" description="Cytoplasmic" evidence="3">
    <location>
        <begin position="284"/>
        <end position="422"/>
    </location>
</feature>
<feature type="domain" description="Ig-like" evidence="3">
    <location>
        <begin position="24"/>
        <end position="121"/>
    </location>
</feature>
<feature type="region of interest" description="Disordered" evidence="4">
    <location>
        <begin position="290"/>
        <end position="367"/>
    </location>
</feature>
<feature type="region of interest" description="Disordered" evidence="4">
    <location>
        <begin position="391"/>
        <end position="422"/>
    </location>
</feature>
<feature type="compositionally biased region" description="Basic residues" evidence="4">
    <location>
        <begin position="290"/>
        <end position="308"/>
    </location>
</feature>
<feature type="compositionally biased region" description="Low complexity" evidence="4">
    <location>
        <begin position="344"/>
        <end position="363"/>
    </location>
</feature>
<feature type="site" description="Receptor capping" evidence="1">
    <location>
        <position position="264"/>
    </location>
</feature>
<feature type="site" description="Receptor-mediated endocytosis" evidence="1">
    <location>
        <position position="382"/>
    </location>
</feature>
<feature type="site" description="Receptor-mediated endocytosis" evidence="1">
    <location>
        <position position="401"/>
    </location>
</feature>
<feature type="modified residue" description="Phosphothreonine" evidence="2">
    <location>
        <position position="91"/>
    </location>
</feature>
<feature type="disulfide bond" evidence="1">
    <location>
        <begin position="37"/>
        <end position="103"/>
    </location>
</feature>
<feature type="disulfide bond" evidence="1">
    <location>
        <begin position="49"/>
        <end position="58"/>
    </location>
</feature>
<feature type="sequence conflict" description="In Ref. 1; AAP51725/AAP51727/AAP51728/AAP51729 and 2; BAE33514/BAB25207." evidence="13" ref="1 2">
    <original>A</original>
    <variation>T</variation>
    <location>
        <position position="172"/>
    </location>
</feature>
<feature type="sequence conflict" description="In Ref. 1; AAP51728." evidence="13" ref="1">
    <original>P</original>
    <variation>L</variation>
    <location>
        <position position="179"/>
    </location>
</feature>
<feature type="sequence conflict" description="In Ref. 1; AAP51728." evidence="13" ref="1">
    <original>K</original>
    <variation>R</variation>
    <location>
        <position position="217"/>
    </location>
</feature>
<feature type="sequence conflict" description="In Ref. 1; AAP51723/AAP51724/AAP51725/AAP51726/AAP51730/AAP51731 and 3; AAI16675/AAI18506." evidence="13" ref="1 3">
    <original>S</original>
    <variation>P</variation>
    <location>
        <position position="321"/>
    </location>
</feature>
<feature type="sequence conflict" description="In Ref. 2; BAE33514/BAB25207 and 3; AAI16675/AAI18506." evidence="13" ref="2 3">
    <original>P</original>
    <variation>Q</variation>
    <location>
        <position position="422"/>
    </location>
</feature>
<reference key="1">
    <citation type="submission" date="2003-01" db="EMBL/GenBank/DDBJ databases">
        <authorList>
            <person name="Song Y."/>
            <person name="Jacob C.O."/>
        </authorList>
    </citation>
    <scope>NUCLEOTIDE SEQUENCE [MRNA]</scope>
    <source>
        <strain>129/Sv</strain>
        <strain>BALB/cJ</strain>
        <strain>C3H/HeJ</strain>
        <strain>C57BL/6J</strain>
        <strain>NOD</strain>
        <strain>NZB</strain>
        <strain>NZM2328</strain>
        <strain>NZW/LacJ</strain>
        <strain>SJL/J</strain>
        <tissue>Spleen</tissue>
    </source>
</reference>
<reference key="2">
    <citation type="journal article" date="2005" name="Science">
        <title>The transcriptional landscape of the mammalian genome.</title>
        <authorList>
            <person name="Carninci P."/>
            <person name="Kasukawa T."/>
            <person name="Katayama S."/>
            <person name="Gough J."/>
            <person name="Frith M.C."/>
            <person name="Maeda N."/>
            <person name="Oyama R."/>
            <person name="Ravasi T."/>
            <person name="Lenhard B."/>
            <person name="Wells C."/>
            <person name="Kodzius R."/>
            <person name="Shimokawa K."/>
            <person name="Bajic V.B."/>
            <person name="Brenner S.E."/>
            <person name="Batalov S."/>
            <person name="Forrest A.R."/>
            <person name="Zavolan M."/>
            <person name="Davis M.J."/>
            <person name="Wilming L.G."/>
            <person name="Aidinis V."/>
            <person name="Allen J.E."/>
            <person name="Ambesi-Impiombato A."/>
            <person name="Apweiler R."/>
            <person name="Aturaliya R.N."/>
            <person name="Bailey T.L."/>
            <person name="Bansal M."/>
            <person name="Baxter L."/>
            <person name="Beisel K.W."/>
            <person name="Bersano T."/>
            <person name="Bono H."/>
            <person name="Chalk A.M."/>
            <person name="Chiu K.P."/>
            <person name="Choudhary V."/>
            <person name="Christoffels A."/>
            <person name="Clutterbuck D.R."/>
            <person name="Crowe M.L."/>
            <person name="Dalla E."/>
            <person name="Dalrymple B.P."/>
            <person name="de Bono B."/>
            <person name="Della Gatta G."/>
            <person name="di Bernardo D."/>
            <person name="Down T."/>
            <person name="Engstrom P."/>
            <person name="Fagiolini M."/>
            <person name="Faulkner G."/>
            <person name="Fletcher C.F."/>
            <person name="Fukushima T."/>
            <person name="Furuno M."/>
            <person name="Futaki S."/>
            <person name="Gariboldi M."/>
            <person name="Georgii-Hemming P."/>
            <person name="Gingeras T.R."/>
            <person name="Gojobori T."/>
            <person name="Green R.E."/>
            <person name="Gustincich S."/>
            <person name="Harbers M."/>
            <person name="Hayashi Y."/>
            <person name="Hensch T.K."/>
            <person name="Hirokawa N."/>
            <person name="Hill D."/>
            <person name="Huminiecki L."/>
            <person name="Iacono M."/>
            <person name="Ikeo K."/>
            <person name="Iwama A."/>
            <person name="Ishikawa T."/>
            <person name="Jakt M."/>
            <person name="Kanapin A."/>
            <person name="Katoh M."/>
            <person name="Kawasawa Y."/>
            <person name="Kelso J."/>
            <person name="Kitamura H."/>
            <person name="Kitano H."/>
            <person name="Kollias G."/>
            <person name="Krishnan S.P."/>
            <person name="Kruger A."/>
            <person name="Kummerfeld S.K."/>
            <person name="Kurochkin I.V."/>
            <person name="Lareau L.F."/>
            <person name="Lazarevic D."/>
            <person name="Lipovich L."/>
            <person name="Liu J."/>
            <person name="Liuni S."/>
            <person name="McWilliam S."/>
            <person name="Madan Babu M."/>
            <person name="Madera M."/>
            <person name="Marchionni L."/>
            <person name="Matsuda H."/>
            <person name="Matsuzawa S."/>
            <person name="Miki H."/>
            <person name="Mignone F."/>
            <person name="Miyake S."/>
            <person name="Morris K."/>
            <person name="Mottagui-Tabar S."/>
            <person name="Mulder N."/>
            <person name="Nakano N."/>
            <person name="Nakauchi H."/>
            <person name="Ng P."/>
            <person name="Nilsson R."/>
            <person name="Nishiguchi S."/>
            <person name="Nishikawa S."/>
            <person name="Nori F."/>
            <person name="Ohara O."/>
            <person name="Okazaki Y."/>
            <person name="Orlando V."/>
            <person name="Pang K.C."/>
            <person name="Pavan W.J."/>
            <person name="Pavesi G."/>
            <person name="Pesole G."/>
            <person name="Petrovsky N."/>
            <person name="Piazza S."/>
            <person name="Reed J."/>
            <person name="Reid J.F."/>
            <person name="Ring B.Z."/>
            <person name="Ringwald M."/>
            <person name="Rost B."/>
            <person name="Ruan Y."/>
            <person name="Salzberg S.L."/>
            <person name="Sandelin A."/>
            <person name="Schneider C."/>
            <person name="Schoenbach C."/>
            <person name="Sekiguchi K."/>
            <person name="Semple C.A."/>
            <person name="Seno S."/>
            <person name="Sessa L."/>
            <person name="Sheng Y."/>
            <person name="Shibata Y."/>
            <person name="Shimada H."/>
            <person name="Shimada K."/>
            <person name="Silva D."/>
            <person name="Sinclair B."/>
            <person name="Sperling S."/>
            <person name="Stupka E."/>
            <person name="Sugiura K."/>
            <person name="Sultana R."/>
            <person name="Takenaka Y."/>
            <person name="Taki K."/>
            <person name="Tammoja K."/>
            <person name="Tan S.L."/>
            <person name="Tang S."/>
            <person name="Taylor M.S."/>
            <person name="Tegner J."/>
            <person name="Teichmann S.A."/>
            <person name="Ueda H.R."/>
            <person name="van Nimwegen E."/>
            <person name="Verardo R."/>
            <person name="Wei C.L."/>
            <person name="Yagi K."/>
            <person name="Yamanishi H."/>
            <person name="Zabarovsky E."/>
            <person name="Zhu S."/>
            <person name="Zimmer A."/>
            <person name="Hide W."/>
            <person name="Bult C."/>
            <person name="Grimmond S.M."/>
            <person name="Teasdale R.D."/>
            <person name="Liu E.T."/>
            <person name="Brusic V."/>
            <person name="Quackenbush J."/>
            <person name="Wahlestedt C."/>
            <person name="Mattick J.S."/>
            <person name="Hume D.A."/>
            <person name="Kai C."/>
            <person name="Sasaki D."/>
            <person name="Tomaru Y."/>
            <person name="Fukuda S."/>
            <person name="Kanamori-Katayama M."/>
            <person name="Suzuki M."/>
            <person name="Aoki J."/>
            <person name="Arakawa T."/>
            <person name="Iida J."/>
            <person name="Imamura K."/>
            <person name="Itoh M."/>
            <person name="Kato T."/>
            <person name="Kawaji H."/>
            <person name="Kawagashira N."/>
            <person name="Kawashima T."/>
            <person name="Kojima M."/>
            <person name="Kondo S."/>
            <person name="Konno H."/>
            <person name="Nakano K."/>
            <person name="Ninomiya N."/>
            <person name="Nishio T."/>
            <person name="Okada M."/>
            <person name="Plessy C."/>
            <person name="Shibata K."/>
            <person name="Shiraki T."/>
            <person name="Suzuki S."/>
            <person name="Tagami M."/>
            <person name="Waki K."/>
            <person name="Watahiki A."/>
            <person name="Okamura-Oho Y."/>
            <person name="Suzuki H."/>
            <person name="Kawai J."/>
            <person name="Hayashizaki Y."/>
        </authorList>
    </citation>
    <scope>NUCLEOTIDE SEQUENCE [LARGE SCALE MRNA]</scope>
    <source>
        <strain>C57BL/6J</strain>
        <strain>NOD</strain>
        <tissue>Pancreas</tissue>
        <tissue>Spleen</tissue>
    </source>
</reference>
<reference key="3">
    <citation type="journal article" date="2004" name="Genome Res.">
        <title>The status, quality, and expansion of the NIH full-length cDNA project: the Mammalian Gene Collection (MGC).</title>
        <authorList>
            <consortium name="The MGC Project Team"/>
        </authorList>
    </citation>
    <scope>NUCLEOTIDE SEQUENCE [LARGE SCALE MRNA]</scope>
</reference>
<reference key="4">
    <citation type="journal article" date="2012" name="Proc. Natl. Acad. Sci. U.S.A.">
        <title>Critical role of the IgM Fc receptor in IgM homeostasis, B-cell survival, and humoral immune responses.</title>
        <authorList>
            <person name="Ouchida R."/>
            <person name="Mori H."/>
            <person name="Hase K."/>
            <person name="Takatsu H."/>
            <person name="Kurosaki T."/>
            <person name="Tokuhisa T."/>
            <person name="Ohno H."/>
            <person name="Wang J.Y."/>
        </authorList>
    </citation>
    <scope>FUNCTION</scope>
    <scope>SUBCELLULAR LOCATION</scope>
    <scope>TISSUE SPECIFICITY</scope>
    <scope>DISRUPTION PHENOTYPE</scope>
</reference>
<reference key="5">
    <citation type="journal article" date="2013" name="J. Immunol.">
        <title>Mouse IgM Fc receptor, FCMR, promotes B cell development and modulates antigen-driven immune responses.</title>
        <authorList>
            <person name="Choi S.C."/>
            <person name="Wang H."/>
            <person name="Tian L."/>
            <person name="Murakami Y."/>
            <person name="Shin D.M."/>
            <person name="Borrego F."/>
            <person name="Morse H.C. III"/>
            <person name="Coligan J.E."/>
        </authorList>
    </citation>
    <scope>FUNCTION</scope>
    <scope>TISSUE SPECIFICITY</scope>
    <scope>DISRUPTION PHENOTYPE</scope>
</reference>
<reference key="6">
    <citation type="journal article" date="2015" name="J. Immunol.">
        <title>FcmuR interacts and cooperates with the B cell receptor To promote B cell survival.</title>
        <authorList>
            <person name="Ouchida R."/>
            <person name="Lu Q."/>
            <person name="Liu J."/>
            <person name="Li Y."/>
            <person name="Chu Y."/>
            <person name="Tsubata T."/>
            <person name="Wang J.Y."/>
        </authorList>
    </citation>
    <scope>FUNCTION</scope>
    <scope>SUBUNIT</scope>
    <scope>SUBCELLULAR LOCATION</scope>
</reference>
<reference key="7">
    <citation type="journal article" date="2017" name="Nat. Immunol.">
        <title>The IgM receptor FcmuR limits tonic BCR signaling by regulating expression of the IgM BCR.</title>
        <authorList>
            <person name="Nguyen T.T."/>
            <person name="Klaesener K."/>
            <person name="Zuern C."/>
            <person name="Castillo P.A."/>
            <person name="Brust-Mascher I."/>
            <person name="Imai D.M."/>
            <person name="Bevins C.L."/>
            <person name="Reardon C."/>
            <person name="Reth M."/>
            <person name="Baumgarth N."/>
        </authorList>
    </citation>
    <scope>FUNCTION</scope>
    <scope>SUBUNIT</scope>
    <scope>INTERACTION WITH IGM BCR</scope>
    <scope>SUBCELLULAR LOCATION</scope>
    <scope>TISSUE SPECIFICITY</scope>
</reference>
<reference key="8">
    <citation type="journal article" date="2018" name="J. Clin. Invest.">
        <title>Surface receptor Toso controls B cell-mediated regulation of T cell immunity.</title>
        <authorList>
            <person name="Yu J."/>
            <person name="Duong V.H.H."/>
            <person name="Westphal K."/>
            <person name="Westphal A."/>
            <person name="Suwandi A."/>
            <person name="Grassl G.A."/>
            <person name="Brand K."/>
            <person name="Chan A.C."/>
            <person name="Foeger N."/>
            <person name="Lee K.H."/>
        </authorList>
    </citation>
    <scope>FUNCTION</scope>
    <scope>DISRUPTION PHENOTYPE</scope>
</reference>
<reference key="9">
    <citation type="journal article" date="2021" name="Cell Rep.">
        <title>Essential role of TOSO/FAIM3 in intestinal IgM reverse transcytosis.</title>
        <authorList>
            <person name="Rochereau N."/>
            <person name="Michaud E."/>
            <person name="Waeckel L."/>
            <person name="Killian M."/>
            <person name="Gayet R."/>
            <person name="Goguyer-Deschaumes R."/>
            <person name="Roblin X."/>
            <person name="Biolley G."/>
            <person name="Corthesy B."/>
            <person name="Paul S."/>
        </authorList>
    </citation>
    <scope>FUNCTION</scope>
    <scope>TISSUE SPECIFICITY</scope>
</reference>
<sequence>MDFWLWLLYFLPVSGALRVLPEVQLNVEWGGSIIIECPLPQLHVRMYLCRQMAKPGICSTVVSNTFVKKEYERRVTLTPCLDKKLFLVEMTQLTENDDGIYACGVGMKTDKGKTQKITLNVHNEYPEPFWEDEWTSERPRWLHRFLQHQMPWLHGSEHPSSSGVIAKVTTPAPKTEAPPVHQPSSITSVTQHPRVYRAFSVSATKSPALLPATTASKTSTQQAIRPLEASYSHHTRLHEQRTRHHGPHYGREDRGLHIPIPEFHILIPTFLGFLLLVLLGLVVKRAIQRRRASSRRAGRLAMRRRGRGASRPFPTQRRDASQRPRSQNNVYSACPRRARGPDSLGPAEAPLLNAPASASPASPQVLEAPWPHTPSLKMSCEYVSLGYQPAVNLEDPDSDDYINIPDPSHLPSYAPGPRSSCP</sequence>
<protein>
    <recommendedName>
        <fullName evidence="1">Immunoglobulin mu Fc receptor</fullName>
        <shortName evidence="1">IgM FcR</shortName>
    </recommendedName>
    <alternativeName>
        <fullName evidence="1">Fas apoptotic inhibitory molecule 3</fullName>
        <shortName evidence="12">FAIM3</shortName>
    </alternativeName>
    <alternativeName>
        <fullName evidence="1">Regulator of Fas-induced apoptosis Toso</fullName>
    </alternativeName>
</protein>
<evidence type="ECO:0000250" key="1">
    <source>
        <dbReference type="UniProtKB" id="O60667"/>
    </source>
</evidence>
<evidence type="ECO:0000250" key="2">
    <source>
        <dbReference type="UniProtKB" id="Q5M871"/>
    </source>
</evidence>
<evidence type="ECO:0000255" key="3"/>
<evidence type="ECO:0000256" key="4">
    <source>
        <dbReference type="SAM" id="MobiDB-lite"/>
    </source>
</evidence>
<evidence type="ECO:0000269" key="5">
    <source>
    </source>
</evidence>
<evidence type="ECO:0000269" key="6">
    <source>
    </source>
</evidence>
<evidence type="ECO:0000269" key="7">
    <source>
    </source>
</evidence>
<evidence type="ECO:0000269" key="8">
    <source>
    </source>
</evidence>
<evidence type="ECO:0000269" key="9">
    <source>
    </source>
</evidence>
<evidence type="ECO:0000269" key="10">
    <source>
    </source>
</evidence>
<evidence type="ECO:0000303" key="11">
    <source>
    </source>
</evidence>
<evidence type="ECO:0000303" key="12">
    <source>
    </source>
</evidence>
<evidence type="ECO:0000305" key="13"/>
<evidence type="ECO:0000312" key="14">
    <source>
        <dbReference type="MGI" id="MGI:1916419"/>
    </source>
</evidence>
<comment type="function">
    <text evidence="1 5 6 7 8 9 10">High-affinity Fc receptor for immunoglobulin M (IgM), both secreted and membrane-bound IgM (By similarity). Primarily regulates IgM transport and homeostasis. In lymphoid cells, enables exocytosis of membrane-bound IgM on the plasma membrane as well as endocytosis of IgM-antigen complexes toward lysosomes for degradation. In mucosal epithelium, mediates retrotranscytosis of antigen-IgM complexes across mucosal M cells toward antigen-presenting cells in mucosal lymphoid tissues (PubMed:28135254, PubMed:34788614). Triggers costimulatory signaling and mediates most of IgM effector functions involved in B cell development and primary immune response to infection. Likely limits tonic IgM BCR signaling to self-antigens for proper negative selection of autoreactive B cells in the bone marrow and for the maintenance of regulatory B cell pool in peripheral lymphoid organs. Mediates antibody responses to T cell-dependent and T cell-independent antigens and promotes induction of an efficient neutralizing IgG response. Engages in cross-talk with antigen-receptor signaling via the non-canonical NF-kappa-B, MAP kinases and calcium signaling pathways (By similarity) (PubMed:22988094, PubMed:23267023, PubMed:25732732, PubMed:28135254, PubMed:29461978).</text>
</comment>
<comment type="subunit">
    <text evidence="1 7 8">Interacts (via Ig-like domain) with IGHM (via CH4/Cmu4 domain), both secreted and membrane-bound IgM; the interaction is glycan-independent and multivalent theoretically involving up to eight binding sites for the IgM pentamer.</text>
</comment>
<comment type="subcellular location">
    <subcellularLocation>
        <location evidence="5 7 8">Cell membrane</location>
        <topology evidence="3">Single-pass membrane protein</topology>
    </subcellularLocation>
    <subcellularLocation>
        <location evidence="1">Early endosome membrane</location>
        <topology evidence="3">Single-pass membrane protein</topology>
    </subcellularLocation>
    <subcellularLocation>
        <location evidence="8">Golgi apparatus</location>
        <location evidence="8">trans-Golgi network membrane</location>
        <topology evidence="3">Single-pass membrane protein</topology>
    </subcellularLocation>
    <subcellularLocation>
        <location evidence="1">Lysosome membrane</location>
        <topology evidence="3">Single-pass membrane protein</topology>
    </subcellularLocation>
    <text evidence="1 8">Continuously recycles between cytoplasmic pool and the plasma membrane to bind as much IgM as possible (By similarity). In immature B cells, colocalizes with IgM in the trans-Golgi network and plasma membrane (PubMed:28135254).</text>
</comment>
<comment type="tissue specificity">
    <text evidence="5 6 8 10">Expressed in pre-B cells, immature and mature B cells residing in primary and secondary lymphoid organs (at protein level) (PubMed:22988094, PubMed:23267023, PubMed:28135254). In the spleen, highly expressed in follicular and marginal zone B cells and at lower levels in germinal center B cells and plasma cells. Expressed in splenic dendritic cells and in granulocytes. In the peritoneum, expressed in B1-a and B-2 cell lineages. In the bone marrow, expressed in immature B cells and at a lower level in pro- and pre-B cells (at protein level) (PubMed:22988094, PubMed:23267023). Expressed in M cells (at protein level) (PubMed:34788614).</text>
</comment>
<comment type="domain">
    <text evidence="1">The Ig-like V-set domain comprises three loops analogous to the complementarity-determining regions (CDR) of Ig variable domains, which are responsible for engaging IgM. Mediates multivalent interactions with the CH4 domains of pentameric IgM, facilitating receptor clustering and signaling.</text>
</comment>
<comment type="PTM">
    <text evidence="1">Phosphorylated on both Tyr and Ser residues.</text>
</comment>
<comment type="PTM">
    <text evidence="1">O-glycosylated. Sialylated. O-linked glycans regulate trafficking to the plasma membrane.</text>
</comment>
<comment type="disruption phenotype">
    <text evidence="5 6 9">Variable phenotypes are observed in mutant mice generated using different exon-targeting strategies. Common features among these mutant mice are the increased B-1 B cell numbers, increased autoreactive IgM and IgG titers and increased susceptibility to acute viral infection.</text>
</comment>
<name>FCMR_MOUSE</name>
<gene>
    <name evidence="11 14" type="primary">Fcmr</name>
    <name type="synonym">Faim3</name>
    <name evidence="12" type="synonym">Toso</name>
</gene>
<keyword id="KW-1003">Cell membrane</keyword>
<keyword id="KW-1015">Disulfide bond</keyword>
<keyword id="KW-0967">Endosome</keyword>
<keyword id="KW-0333">Golgi apparatus</keyword>
<keyword id="KW-0391">Immunity</keyword>
<keyword id="KW-0393">Immunoglobulin domain</keyword>
<keyword id="KW-0458">Lysosome</keyword>
<keyword id="KW-0472">Membrane</keyword>
<keyword id="KW-0597">Phosphoprotein</keyword>
<keyword id="KW-0675">Receptor</keyword>
<keyword id="KW-1185">Reference proteome</keyword>
<keyword id="KW-0732">Signal</keyword>
<keyword id="KW-0812">Transmembrane</keyword>
<keyword id="KW-1133">Transmembrane helix</keyword>
<proteinExistence type="evidence at protein level"/>